<protein>
    <recommendedName>
        <fullName evidence="1">Chromosome partition protein MukB</fullName>
    </recommendedName>
    <alternativeName>
        <fullName evidence="1">Structural maintenance of chromosome-related protein</fullName>
    </alternativeName>
</protein>
<comment type="function">
    <text evidence="1">Plays a central role in chromosome condensation, segregation and cell cycle progression. Functions as a homodimer, which is essential for chromosome partition. Involved in negative DNA supercoiling in vivo, and by this means organize and compact chromosomes. May achieve or facilitate chromosome segregation by condensation DNA from both sides of a centrally located replisome during cell division.</text>
</comment>
<comment type="subunit">
    <text evidence="1">Homodimerization via its hinge domain. Binds to DNA via its C-terminal region. Interacts, and probably forms a ternary complex, with MukE and MukF via its C-terminal region. The complex formation is stimulated by calcium or magnesium. Interacts with tubulin-related protein FtsZ.</text>
</comment>
<comment type="subcellular location">
    <subcellularLocation>
        <location evidence="1">Cytoplasm</location>
        <location evidence="1">Nucleoid</location>
    </subcellularLocation>
    <text evidence="1">Restricted to the nucleoid region.</text>
</comment>
<comment type="domain">
    <text evidence="1">The hinge domain, which separates the large intramolecular coiled coil regions, allows the homodimerization, forming a V-shaped homodimer.</text>
</comment>
<comment type="similarity">
    <text evidence="1">Belongs to the SMC family. MukB subfamily.</text>
</comment>
<organism>
    <name type="scientific">Yersinia pestis</name>
    <dbReference type="NCBI Taxonomy" id="632"/>
    <lineage>
        <taxon>Bacteria</taxon>
        <taxon>Pseudomonadati</taxon>
        <taxon>Pseudomonadota</taxon>
        <taxon>Gammaproteobacteria</taxon>
        <taxon>Enterobacterales</taxon>
        <taxon>Yersiniaceae</taxon>
        <taxon>Yersinia</taxon>
    </lineage>
</organism>
<sequence>MIERGKFRSLTLVNWNGFFARTFDLDELVTTLSGGNGAGKSTTMAAFVTALIPDLTLLHFRNTTEAGATSGSRDKGLHGKLRAGVCYSTLDVVNSRHQRVVVGVRLQQVAGRDRKVDIKPFTIQGLPTAIQPTEILTELVAERQARVLSLPELKERVEAMEGVQFKQFNSITDYHSLMFDLGVIPKRLRSSADRSKFYRLIEASLYGGISSAITRSLRDYLLPENSGVRKAFQDMEAALRENRMTLEAIRVTQSDRDLFKHLISEATSYVAADYMRHANERRIHLDSALVLRRDLFSSRKQLVTEQYRHVEMSRELAEQSGAESDLETDYQAASDHLNLVQTAMRQQEKIERYQSDLEELTYRLEEQSEVVSEASEQQADNEARAEAAELEVDELKSQLADYQQALDVQQTRAIQYQQALQALERARALCQLPELTADNAEEWLETFHAKEQEATESLLQLEQKLSVADAAHSQFEQAYQLVVNIAGEVSRSEAWQTARELLRDWPSQQHLAERVQPLRMRLSELEQRLRAQQDAERLLQEFCKRQGNAYQPEELEALQRELESQVEELSLSVSDAGERRMAMRQELEQLKLKIQELTARAPVWLAAQDALSQLSEQSGEALEDSRQVTEYMQQLLERERETTVERDEIAASKRAIEAQIERLSQPSGAEDARLIALAERFGGVLLSEIYDDVTIDDAPYFSALYGPSRHGIVVPDLSLVREHLQGLDDCPEDLYLIEGDPQSFDDSVFAVEEHEKAVVVKIADRQWRYSRYPEVPLFGRAARENRLETLYQERDRLAERYATLSFDVQKTQRTHQAFSRFIGSHLAVAFDADPEAEIRLLNTRRGEIERALNAHEDQNQQQRQQFDQAKEGISALNRLIPLVSLLLDETLTDRVEEITEELAEAQEAARYIQQHGVSLTKLEPLLSVLQSDPQQHEQLQESYVLAQNSQRLAKQQAFALTEVVQRRAHFSYTDSAGMLTENSDLNDKLRQRLEQAEAERTRAREQLRQYQSQFTQYSQVLASLKSSYDAKRDMLKELSQELVDIGVPADANAEARARARRDELHAALSTNRSRRNQLEKQLTFCEAEMDSLQKKLRKLERDYHQIREQVVNAKAGWCAVMRMVKDNGVERRLHRRELAYMDGDELRSMSDKALGALRLAVADNEHLRDVLRLSEDPKRPERKIQFYIAVYQHLRERIRQDIIRTDDPVEAIEQMEIELGRLTEELTAREQKLAISSKSVSNIIRKTIHREQNRIRMLNQGLQAVSFGQVKSVRLNVNVREAHATLLDVLSEQQEQHQDLFNSNRLTFSEALAKLYQRLNPQMDMGQRLPQTIGEELLDYRNYLELEVEVYRGADGWLRAESGALSTGEAIGTGMSILVMVVQSWEEESRRLRGKDISPCRLLFLDEAARLDAKSIATLFELCERLEMQLIIAAPENISPEKGTTYKLVRKVFQNHEHVHVVGLRGFANEMPSLPPIAAELQQGG</sequence>
<accession>Q8ZG99</accession>
<accession>Q0WH10</accession>
<name>MUKB_YERPE</name>
<evidence type="ECO:0000255" key="1">
    <source>
        <dbReference type="HAMAP-Rule" id="MF_01800"/>
    </source>
</evidence>
<dbReference type="EMBL" id="AL590842">
    <property type="protein sequence ID" value="CAL20057.1"/>
    <property type="molecule type" value="Genomic_DNA"/>
</dbReference>
<dbReference type="EMBL" id="AE009952">
    <property type="protein sequence ID" value="AAM86317.1"/>
    <property type="molecule type" value="Genomic_DNA"/>
</dbReference>
<dbReference type="EMBL" id="AE017042">
    <property type="protein sequence ID" value="AAS61431.1"/>
    <property type="molecule type" value="Genomic_DNA"/>
</dbReference>
<dbReference type="PIR" id="AG0171">
    <property type="entry name" value="AG0171"/>
</dbReference>
<dbReference type="RefSeq" id="WP_002211308.1">
    <property type="nucleotide sequence ID" value="NZ_WUCM01000045.1"/>
</dbReference>
<dbReference type="RefSeq" id="YP_002346428.1">
    <property type="nucleotide sequence ID" value="NC_003143.1"/>
</dbReference>
<dbReference type="SMR" id="Q8ZG99"/>
<dbReference type="IntAct" id="Q8ZG99">
    <property type="interactions" value="3"/>
</dbReference>
<dbReference type="STRING" id="214092.YPO1405"/>
<dbReference type="PaxDb" id="214092-YPO1405"/>
<dbReference type="DNASU" id="1147712"/>
<dbReference type="EnsemblBacteria" id="AAS61431">
    <property type="protein sequence ID" value="AAS61431"/>
    <property type="gene ID" value="YP_1188"/>
</dbReference>
<dbReference type="GeneID" id="57977201"/>
<dbReference type="KEGG" id="ype:YPO1405"/>
<dbReference type="KEGG" id="ypk:y2765"/>
<dbReference type="KEGG" id="ypm:YP_1188"/>
<dbReference type="PATRIC" id="fig|214092.21.peg.1730"/>
<dbReference type="eggNOG" id="COG3096">
    <property type="taxonomic scope" value="Bacteria"/>
</dbReference>
<dbReference type="HOGENOM" id="CLU_004430_0_0_6"/>
<dbReference type="OMA" id="FIAVYQH"/>
<dbReference type="OrthoDB" id="6722439at2"/>
<dbReference type="Proteomes" id="UP000000815">
    <property type="component" value="Chromosome"/>
</dbReference>
<dbReference type="Proteomes" id="UP000001019">
    <property type="component" value="Chromosome"/>
</dbReference>
<dbReference type="Proteomes" id="UP000002490">
    <property type="component" value="Chromosome"/>
</dbReference>
<dbReference type="GO" id="GO:0005737">
    <property type="term" value="C:cytoplasm"/>
    <property type="evidence" value="ECO:0000318"/>
    <property type="project" value="GO_Central"/>
</dbReference>
<dbReference type="GO" id="GO:0009295">
    <property type="term" value="C:nucleoid"/>
    <property type="evidence" value="ECO:0007669"/>
    <property type="project" value="UniProtKB-SubCell"/>
</dbReference>
<dbReference type="GO" id="GO:0005524">
    <property type="term" value="F:ATP binding"/>
    <property type="evidence" value="ECO:0007669"/>
    <property type="project" value="UniProtKB-UniRule"/>
</dbReference>
<dbReference type="GO" id="GO:0003677">
    <property type="term" value="F:DNA binding"/>
    <property type="evidence" value="ECO:0007669"/>
    <property type="project" value="UniProtKB-UniRule"/>
</dbReference>
<dbReference type="GO" id="GO:0051301">
    <property type="term" value="P:cell division"/>
    <property type="evidence" value="ECO:0007669"/>
    <property type="project" value="UniProtKB-KW"/>
</dbReference>
<dbReference type="GO" id="GO:0030261">
    <property type="term" value="P:chromosome condensation"/>
    <property type="evidence" value="ECO:0007669"/>
    <property type="project" value="UniProtKB-KW"/>
</dbReference>
<dbReference type="GO" id="GO:0007059">
    <property type="term" value="P:chromosome segregation"/>
    <property type="evidence" value="ECO:0007669"/>
    <property type="project" value="UniProtKB-UniRule"/>
</dbReference>
<dbReference type="GO" id="GO:0006260">
    <property type="term" value="P:DNA replication"/>
    <property type="evidence" value="ECO:0007669"/>
    <property type="project" value="UniProtKB-UniRule"/>
</dbReference>
<dbReference type="FunFam" id="3.30.70.3500:FF:000001">
    <property type="entry name" value="Chromosome partition protein MukB"/>
    <property type="match status" value="1"/>
</dbReference>
<dbReference type="FunFam" id="3.40.1140.10:FF:000001">
    <property type="entry name" value="Chromosome partition protein MukB"/>
    <property type="match status" value="1"/>
</dbReference>
<dbReference type="FunFam" id="3.40.1140.10:FF:000002">
    <property type="entry name" value="Chromosome partition protein MukB"/>
    <property type="match status" value="1"/>
</dbReference>
<dbReference type="Gene3D" id="1.10.287.1490">
    <property type="match status" value="1"/>
</dbReference>
<dbReference type="Gene3D" id="1.20.58.850">
    <property type="match status" value="1"/>
</dbReference>
<dbReference type="Gene3D" id="3.40.1140.10">
    <property type="match status" value="2"/>
</dbReference>
<dbReference type="Gene3D" id="1.20.5.420">
    <property type="entry name" value="Immunoglobulin FC, subunit C"/>
    <property type="match status" value="1"/>
</dbReference>
<dbReference type="Gene3D" id="3.30.70.3500">
    <property type="entry name" value="MukB, hinge domain"/>
    <property type="match status" value="1"/>
</dbReference>
<dbReference type="HAMAP" id="MF_01800">
    <property type="entry name" value="MukB"/>
    <property type="match status" value="1"/>
</dbReference>
<dbReference type="InterPro" id="IPR012090">
    <property type="entry name" value="MukB"/>
</dbReference>
<dbReference type="InterPro" id="IPR050308">
    <property type="entry name" value="MukB/SMC"/>
</dbReference>
<dbReference type="InterPro" id="IPR032520">
    <property type="entry name" value="MukB_hinge"/>
</dbReference>
<dbReference type="InterPro" id="IPR042501">
    <property type="entry name" value="MukB_hinge_sf"/>
</dbReference>
<dbReference type="InterPro" id="IPR007406">
    <property type="entry name" value="MukB_N_dom"/>
</dbReference>
<dbReference type="InterPro" id="IPR027417">
    <property type="entry name" value="P-loop_NTPase"/>
</dbReference>
<dbReference type="NCBIfam" id="NF003422">
    <property type="entry name" value="PRK04863.1"/>
    <property type="match status" value="1"/>
</dbReference>
<dbReference type="PANTHER" id="PTHR42963">
    <property type="entry name" value="CHROMOSOME PARTITION PROTEIN MUKB"/>
    <property type="match status" value="1"/>
</dbReference>
<dbReference type="PANTHER" id="PTHR42963:SF1">
    <property type="entry name" value="DUF4476 DOMAIN-CONTAINING PROTEIN"/>
    <property type="match status" value="1"/>
</dbReference>
<dbReference type="Pfam" id="PF04310">
    <property type="entry name" value="MukB"/>
    <property type="match status" value="1"/>
</dbReference>
<dbReference type="Pfam" id="PF16330">
    <property type="entry name" value="MukB_hinge"/>
    <property type="match status" value="1"/>
</dbReference>
<dbReference type="Pfam" id="PF13558">
    <property type="entry name" value="SbcC_Walker_B"/>
    <property type="match status" value="1"/>
</dbReference>
<dbReference type="PIRSF" id="PIRSF005246">
    <property type="entry name" value="MukB"/>
    <property type="match status" value="1"/>
</dbReference>
<dbReference type="SUPFAM" id="SSF52540">
    <property type="entry name" value="P-loop containing nucleoside triphosphate hydrolases"/>
    <property type="match status" value="2"/>
</dbReference>
<feature type="chain" id="PRO_0000068233" description="Chromosome partition protein MukB">
    <location>
        <begin position="1"/>
        <end position="1485"/>
    </location>
</feature>
<feature type="region of interest" description="Flexible hinge" evidence="1">
    <location>
        <begin position="666"/>
        <end position="783"/>
    </location>
</feature>
<feature type="coiled-coil region" evidence="1">
    <location>
        <begin position="337"/>
        <end position="480"/>
    </location>
</feature>
<feature type="coiled-coil region" evidence="1">
    <location>
        <begin position="509"/>
        <end position="605"/>
    </location>
</feature>
<feature type="coiled-coil region" evidence="1">
    <location>
        <begin position="780"/>
        <end position="805"/>
    </location>
</feature>
<feature type="coiled-coil region" evidence="1">
    <location>
        <begin position="835"/>
        <end position="915"/>
    </location>
</feature>
<feature type="coiled-coil region" evidence="1">
    <location>
        <begin position="977"/>
        <end position="1116"/>
    </location>
</feature>
<feature type="coiled-coil region" evidence="1">
    <location>
        <begin position="1210"/>
        <end position="1235"/>
    </location>
</feature>
<feature type="binding site" evidence="1">
    <location>
        <begin position="34"/>
        <end position="41"/>
    </location>
    <ligand>
        <name>ATP</name>
        <dbReference type="ChEBI" id="CHEBI:30616"/>
    </ligand>
</feature>
<gene>
    <name evidence="1" type="primary">mukB</name>
    <name type="ordered locus">YPO1405</name>
    <name type="ordered locus">y2765</name>
    <name type="ordered locus">YP_1188</name>
</gene>
<keyword id="KW-0067">ATP-binding</keyword>
<keyword id="KW-0131">Cell cycle</keyword>
<keyword id="KW-0132">Cell division</keyword>
<keyword id="KW-0159">Chromosome partition</keyword>
<keyword id="KW-0175">Coiled coil</keyword>
<keyword id="KW-0963">Cytoplasm</keyword>
<keyword id="KW-0226">DNA condensation</keyword>
<keyword id="KW-0238">DNA-binding</keyword>
<keyword id="KW-0547">Nucleotide-binding</keyword>
<keyword id="KW-1185">Reference proteome</keyword>
<proteinExistence type="inferred from homology"/>
<reference key="1">
    <citation type="journal article" date="2001" name="Nature">
        <title>Genome sequence of Yersinia pestis, the causative agent of plague.</title>
        <authorList>
            <person name="Parkhill J."/>
            <person name="Wren B.W."/>
            <person name="Thomson N.R."/>
            <person name="Titball R.W."/>
            <person name="Holden M.T.G."/>
            <person name="Prentice M.B."/>
            <person name="Sebaihia M."/>
            <person name="James K.D."/>
            <person name="Churcher C.M."/>
            <person name="Mungall K.L."/>
            <person name="Baker S."/>
            <person name="Basham D."/>
            <person name="Bentley S.D."/>
            <person name="Brooks K."/>
            <person name="Cerdeno-Tarraga A.-M."/>
            <person name="Chillingworth T."/>
            <person name="Cronin A."/>
            <person name="Davies R.M."/>
            <person name="Davis P."/>
            <person name="Dougan G."/>
            <person name="Feltwell T."/>
            <person name="Hamlin N."/>
            <person name="Holroyd S."/>
            <person name="Jagels K."/>
            <person name="Karlyshev A.V."/>
            <person name="Leather S."/>
            <person name="Moule S."/>
            <person name="Oyston P.C.F."/>
            <person name="Quail M.A."/>
            <person name="Rutherford K.M."/>
            <person name="Simmonds M."/>
            <person name="Skelton J."/>
            <person name="Stevens K."/>
            <person name="Whitehead S."/>
            <person name="Barrell B.G."/>
        </authorList>
    </citation>
    <scope>NUCLEOTIDE SEQUENCE [LARGE SCALE GENOMIC DNA]</scope>
    <source>
        <strain>CO-92 / Biovar Orientalis</strain>
    </source>
</reference>
<reference key="2">
    <citation type="journal article" date="2002" name="J. Bacteriol.">
        <title>Genome sequence of Yersinia pestis KIM.</title>
        <authorList>
            <person name="Deng W."/>
            <person name="Burland V."/>
            <person name="Plunkett G. III"/>
            <person name="Boutin A."/>
            <person name="Mayhew G.F."/>
            <person name="Liss P."/>
            <person name="Perna N.T."/>
            <person name="Rose D.J."/>
            <person name="Mau B."/>
            <person name="Zhou S."/>
            <person name="Schwartz D.C."/>
            <person name="Fetherston J.D."/>
            <person name="Lindler L.E."/>
            <person name="Brubaker R.R."/>
            <person name="Plano G.V."/>
            <person name="Straley S.C."/>
            <person name="McDonough K.A."/>
            <person name="Nilles M.L."/>
            <person name="Matson J.S."/>
            <person name="Blattner F.R."/>
            <person name="Perry R.D."/>
        </authorList>
    </citation>
    <scope>NUCLEOTIDE SEQUENCE [LARGE SCALE GENOMIC DNA]</scope>
    <source>
        <strain>KIM10+ / Biovar Mediaevalis</strain>
    </source>
</reference>
<reference key="3">
    <citation type="journal article" date="2004" name="DNA Res.">
        <title>Complete genome sequence of Yersinia pestis strain 91001, an isolate avirulent to humans.</title>
        <authorList>
            <person name="Song Y."/>
            <person name="Tong Z."/>
            <person name="Wang J."/>
            <person name="Wang L."/>
            <person name="Guo Z."/>
            <person name="Han Y."/>
            <person name="Zhang J."/>
            <person name="Pei D."/>
            <person name="Zhou D."/>
            <person name="Qin H."/>
            <person name="Pang X."/>
            <person name="Han Y."/>
            <person name="Zhai J."/>
            <person name="Li M."/>
            <person name="Cui B."/>
            <person name="Qi Z."/>
            <person name="Jin L."/>
            <person name="Dai R."/>
            <person name="Chen F."/>
            <person name="Li S."/>
            <person name="Ye C."/>
            <person name="Du Z."/>
            <person name="Lin W."/>
            <person name="Wang J."/>
            <person name="Yu J."/>
            <person name="Yang H."/>
            <person name="Wang J."/>
            <person name="Huang P."/>
            <person name="Yang R."/>
        </authorList>
    </citation>
    <scope>NUCLEOTIDE SEQUENCE [LARGE SCALE GENOMIC DNA]</scope>
    <source>
        <strain>91001 / Biovar Mediaevalis</strain>
    </source>
</reference>